<organism>
    <name type="scientific">Exiguobacterium sibiricum (strain DSM 17290 / CCUG 55495 / CIP 109462 / JCM 13490 / 255-15)</name>
    <dbReference type="NCBI Taxonomy" id="262543"/>
    <lineage>
        <taxon>Bacteria</taxon>
        <taxon>Bacillati</taxon>
        <taxon>Bacillota</taxon>
        <taxon>Bacilli</taxon>
        <taxon>Bacillales</taxon>
        <taxon>Bacillales Family XII. Incertae Sedis</taxon>
        <taxon>Exiguobacterium</taxon>
    </lineage>
</organism>
<proteinExistence type="inferred from homology"/>
<protein>
    <recommendedName>
        <fullName evidence="1">DNA ligase</fullName>
        <ecNumber evidence="1">6.5.1.2</ecNumber>
    </recommendedName>
    <alternativeName>
        <fullName evidence="1">Polydeoxyribonucleotide synthase [NAD(+)]</fullName>
    </alternativeName>
</protein>
<comment type="function">
    <text evidence="1">DNA ligase that catalyzes the formation of phosphodiester linkages between 5'-phosphoryl and 3'-hydroxyl groups in double-stranded DNA using NAD as a coenzyme and as the energy source for the reaction. It is essential for DNA replication and repair of damaged DNA.</text>
</comment>
<comment type="catalytic activity">
    <reaction evidence="1">
        <text>NAD(+) + (deoxyribonucleotide)n-3'-hydroxyl + 5'-phospho-(deoxyribonucleotide)m = (deoxyribonucleotide)n+m + AMP + beta-nicotinamide D-nucleotide.</text>
        <dbReference type="EC" id="6.5.1.2"/>
    </reaction>
</comment>
<comment type="cofactor">
    <cofactor evidence="1">
        <name>Mg(2+)</name>
        <dbReference type="ChEBI" id="CHEBI:18420"/>
    </cofactor>
    <cofactor evidence="1">
        <name>Mn(2+)</name>
        <dbReference type="ChEBI" id="CHEBI:29035"/>
    </cofactor>
</comment>
<comment type="similarity">
    <text evidence="1">Belongs to the NAD-dependent DNA ligase family. LigA subfamily.</text>
</comment>
<feature type="chain" id="PRO_0000380383" description="DNA ligase">
    <location>
        <begin position="1"/>
        <end position="664"/>
    </location>
</feature>
<feature type="domain" description="BRCT" evidence="1">
    <location>
        <begin position="583"/>
        <end position="664"/>
    </location>
</feature>
<feature type="active site" description="N6-AMP-lysine intermediate" evidence="1">
    <location>
        <position position="112"/>
    </location>
</feature>
<feature type="binding site" evidence="1">
    <location>
        <begin position="31"/>
        <end position="35"/>
    </location>
    <ligand>
        <name>NAD(+)</name>
        <dbReference type="ChEBI" id="CHEBI:57540"/>
    </ligand>
</feature>
<feature type="binding site" evidence="1">
    <location>
        <begin position="80"/>
        <end position="81"/>
    </location>
    <ligand>
        <name>NAD(+)</name>
        <dbReference type="ChEBI" id="CHEBI:57540"/>
    </ligand>
</feature>
<feature type="binding site" evidence="1">
    <location>
        <position position="110"/>
    </location>
    <ligand>
        <name>NAD(+)</name>
        <dbReference type="ChEBI" id="CHEBI:57540"/>
    </ligand>
</feature>
<feature type="binding site" evidence="1">
    <location>
        <position position="133"/>
    </location>
    <ligand>
        <name>NAD(+)</name>
        <dbReference type="ChEBI" id="CHEBI:57540"/>
    </ligand>
</feature>
<feature type="binding site" evidence="1">
    <location>
        <position position="167"/>
    </location>
    <ligand>
        <name>NAD(+)</name>
        <dbReference type="ChEBI" id="CHEBI:57540"/>
    </ligand>
</feature>
<feature type="binding site" evidence="1">
    <location>
        <position position="282"/>
    </location>
    <ligand>
        <name>NAD(+)</name>
        <dbReference type="ChEBI" id="CHEBI:57540"/>
    </ligand>
</feature>
<feature type="binding site" evidence="1">
    <location>
        <position position="306"/>
    </location>
    <ligand>
        <name>NAD(+)</name>
        <dbReference type="ChEBI" id="CHEBI:57540"/>
    </ligand>
</feature>
<feature type="binding site" evidence="1">
    <location>
        <position position="400"/>
    </location>
    <ligand>
        <name>Zn(2+)</name>
        <dbReference type="ChEBI" id="CHEBI:29105"/>
    </ligand>
</feature>
<feature type="binding site" evidence="1">
    <location>
        <position position="403"/>
    </location>
    <ligand>
        <name>Zn(2+)</name>
        <dbReference type="ChEBI" id="CHEBI:29105"/>
    </ligand>
</feature>
<feature type="binding site" evidence="1">
    <location>
        <position position="418"/>
    </location>
    <ligand>
        <name>Zn(2+)</name>
        <dbReference type="ChEBI" id="CHEBI:29105"/>
    </ligand>
</feature>
<feature type="binding site" evidence="1">
    <location>
        <position position="423"/>
    </location>
    <ligand>
        <name>Zn(2+)</name>
        <dbReference type="ChEBI" id="CHEBI:29105"/>
    </ligand>
</feature>
<name>DNLJ_EXIS2</name>
<dbReference type="EC" id="6.5.1.2" evidence="1"/>
<dbReference type="EMBL" id="CP001022">
    <property type="protein sequence ID" value="ACB59947.1"/>
    <property type="molecule type" value="Genomic_DNA"/>
</dbReference>
<dbReference type="RefSeq" id="WP_012369371.1">
    <property type="nucleotide sequence ID" value="NC_010556.1"/>
</dbReference>
<dbReference type="SMR" id="B1YJ17"/>
<dbReference type="STRING" id="262543.Exig_0465"/>
<dbReference type="KEGG" id="esi:Exig_0465"/>
<dbReference type="eggNOG" id="COG0272">
    <property type="taxonomic scope" value="Bacteria"/>
</dbReference>
<dbReference type="HOGENOM" id="CLU_007764_2_1_9"/>
<dbReference type="OrthoDB" id="9759736at2"/>
<dbReference type="Proteomes" id="UP000001681">
    <property type="component" value="Chromosome"/>
</dbReference>
<dbReference type="GO" id="GO:0005829">
    <property type="term" value="C:cytosol"/>
    <property type="evidence" value="ECO:0007669"/>
    <property type="project" value="TreeGrafter"/>
</dbReference>
<dbReference type="GO" id="GO:0003677">
    <property type="term" value="F:DNA binding"/>
    <property type="evidence" value="ECO:0007669"/>
    <property type="project" value="InterPro"/>
</dbReference>
<dbReference type="GO" id="GO:0003911">
    <property type="term" value="F:DNA ligase (NAD+) activity"/>
    <property type="evidence" value="ECO:0007669"/>
    <property type="project" value="UniProtKB-UniRule"/>
</dbReference>
<dbReference type="GO" id="GO:0046872">
    <property type="term" value="F:metal ion binding"/>
    <property type="evidence" value="ECO:0007669"/>
    <property type="project" value="UniProtKB-KW"/>
</dbReference>
<dbReference type="GO" id="GO:0006281">
    <property type="term" value="P:DNA repair"/>
    <property type="evidence" value="ECO:0007669"/>
    <property type="project" value="UniProtKB-KW"/>
</dbReference>
<dbReference type="GO" id="GO:0006260">
    <property type="term" value="P:DNA replication"/>
    <property type="evidence" value="ECO:0007669"/>
    <property type="project" value="UniProtKB-KW"/>
</dbReference>
<dbReference type="CDD" id="cd17748">
    <property type="entry name" value="BRCT_DNA_ligase_like"/>
    <property type="match status" value="1"/>
</dbReference>
<dbReference type="CDD" id="cd00114">
    <property type="entry name" value="LIGANc"/>
    <property type="match status" value="1"/>
</dbReference>
<dbReference type="FunFam" id="1.10.150.20:FF:000006">
    <property type="entry name" value="DNA ligase"/>
    <property type="match status" value="1"/>
</dbReference>
<dbReference type="FunFam" id="1.10.150.20:FF:000007">
    <property type="entry name" value="DNA ligase"/>
    <property type="match status" value="1"/>
</dbReference>
<dbReference type="FunFam" id="1.10.287.610:FF:000002">
    <property type="entry name" value="DNA ligase"/>
    <property type="match status" value="1"/>
</dbReference>
<dbReference type="FunFam" id="2.40.50.140:FF:000012">
    <property type="entry name" value="DNA ligase"/>
    <property type="match status" value="1"/>
</dbReference>
<dbReference type="FunFam" id="3.30.470.30:FF:000001">
    <property type="entry name" value="DNA ligase"/>
    <property type="match status" value="1"/>
</dbReference>
<dbReference type="Gene3D" id="6.20.10.30">
    <property type="match status" value="1"/>
</dbReference>
<dbReference type="Gene3D" id="1.10.150.20">
    <property type="entry name" value="5' to 3' exonuclease, C-terminal subdomain"/>
    <property type="match status" value="2"/>
</dbReference>
<dbReference type="Gene3D" id="3.40.50.10190">
    <property type="entry name" value="BRCT domain"/>
    <property type="match status" value="1"/>
</dbReference>
<dbReference type="Gene3D" id="3.30.470.30">
    <property type="entry name" value="DNA ligase/mRNA capping enzyme"/>
    <property type="match status" value="1"/>
</dbReference>
<dbReference type="Gene3D" id="1.10.287.610">
    <property type="entry name" value="Helix hairpin bin"/>
    <property type="match status" value="1"/>
</dbReference>
<dbReference type="Gene3D" id="2.40.50.140">
    <property type="entry name" value="Nucleic acid-binding proteins"/>
    <property type="match status" value="1"/>
</dbReference>
<dbReference type="HAMAP" id="MF_01588">
    <property type="entry name" value="DNA_ligase_A"/>
    <property type="match status" value="1"/>
</dbReference>
<dbReference type="InterPro" id="IPR001357">
    <property type="entry name" value="BRCT_dom"/>
</dbReference>
<dbReference type="InterPro" id="IPR036420">
    <property type="entry name" value="BRCT_dom_sf"/>
</dbReference>
<dbReference type="InterPro" id="IPR041663">
    <property type="entry name" value="DisA/LigA_HHH"/>
</dbReference>
<dbReference type="InterPro" id="IPR001679">
    <property type="entry name" value="DNA_ligase"/>
</dbReference>
<dbReference type="InterPro" id="IPR018239">
    <property type="entry name" value="DNA_ligase_AS"/>
</dbReference>
<dbReference type="InterPro" id="IPR013839">
    <property type="entry name" value="DNAligase_adenylation"/>
</dbReference>
<dbReference type="InterPro" id="IPR013840">
    <property type="entry name" value="DNAligase_N"/>
</dbReference>
<dbReference type="InterPro" id="IPR003583">
    <property type="entry name" value="Hlx-hairpin-Hlx_DNA-bd_motif"/>
</dbReference>
<dbReference type="InterPro" id="IPR012340">
    <property type="entry name" value="NA-bd_OB-fold"/>
</dbReference>
<dbReference type="InterPro" id="IPR004150">
    <property type="entry name" value="NAD_DNA_ligase_OB"/>
</dbReference>
<dbReference type="InterPro" id="IPR010994">
    <property type="entry name" value="RuvA_2-like"/>
</dbReference>
<dbReference type="InterPro" id="IPR004149">
    <property type="entry name" value="Znf_DNAligase_C4"/>
</dbReference>
<dbReference type="NCBIfam" id="TIGR00575">
    <property type="entry name" value="dnlj"/>
    <property type="match status" value="1"/>
</dbReference>
<dbReference type="NCBIfam" id="NF005932">
    <property type="entry name" value="PRK07956.1"/>
    <property type="match status" value="1"/>
</dbReference>
<dbReference type="PANTHER" id="PTHR23389">
    <property type="entry name" value="CHROMOSOME TRANSMISSION FIDELITY FACTOR 18"/>
    <property type="match status" value="1"/>
</dbReference>
<dbReference type="PANTHER" id="PTHR23389:SF9">
    <property type="entry name" value="DNA LIGASE"/>
    <property type="match status" value="1"/>
</dbReference>
<dbReference type="Pfam" id="PF00533">
    <property type="entry name" value="BRCT"/>
    <property type="match status" value="1"/>
</dbReference>
<dbReference type="Pfam" id="PF01653">
    <property type="entry name" value="DNA_ligase_aden"/>
    <property type="match status" value="1"/>
</dbReference>
<dbReference type="Pfam" id="PF03120">
    <property type="entry name" value="DNA_ligase_OB"/>
    <property type="match status" value="1"/>
</dbReference>
<dbReference type="Pfam" id="PF03119">
    <property type="entry name" value="DNA_ligase_ZBD"/>
    <property type="match status" value="1"/>
</dbReference>
<dbReference type="Pfam" id="PF12826">
    <property type="entry name" value="HHH_2"/>
    <property type="match status" value="1"/>
</dbReference>
<dbReference type="Pfam" id="PF14520">
    <property type="entry name" value="HHH_5"/>
    <property type="match status" value="1"/>
</dbReference>
<dbReference type="Pfam" id="PF22745">
    <property type="entry name" value="Nlig-Ia"/>
    <property type="match status" value="1"/>
</dbReference>
<dbReference type="PIRSF" id="PIRSF001604">
    <property type="entry name" value="LigA"/>
    <property type="match status" value="1"/>
</dbReference>
<dbReference type="SMART" id="SM00292">
    <property type="entry name" value="BRCT"/>
    <property type="match status" value="1"/>
</dbReference>
<dbReference type="SMART" id="SM00278">
    <property type="entry name" value="HhH1"/>
    <property type="match status" value="3"/>
</dbReference>
<dbReference type="SMART" id="SM00532">
    <property type="entry name" value="LIGANc"/>
    <property type="match status" value="1"/>
</dbReference>
<dbReference type="SUPFAM" id="SSF52113">
    <property type="entry name" value="BRCT domain"/>
    <property type="match status" value="1"/>
</dbReference>
<dbReference type="SUPFAM" id="SSF56091">
    <property type="entry name" value="DNA ligase/mRNA capping enzyme, catalytic domain"/>
    <property type="match status" value="1"/>
</dbReference>
<dbReference type="SUPFAM" id="SSF50249">
    <property type="entry name" value="Nucleic acid-binding proteins"/>
    <property type="match status" value="1"/>
</dbReference>
<dbReference type="SUPFAM" id="SSF47781">
    <property type="entry name" value="RuvA domain 2-like"/>
    <property type="match status" value="1"/>
</dbReference>
<dbReference type="PROSITE" id="PS50172">
    <property type="entry name" value="BRCT"/>
    <property type="match status" value="1"/>
</dbReference>
<dbReference type="PROSITE" id="PS01055">
    <property type="entry name" value="DNA_LIGASE_N1"/>
    <property type="match status" value="1"/>
</dbReference>
<accession>B1YJ17</accession>
<gene>
    <name evidence="1" type="primary">ligA</name>
    <name type="ordered locus">Exig_0465</name>
</gene>
<sequence length="664" mass="73665">MIEQARIEELRQKLNQYSYEYYVQDQPTVPDSTYDQLLRELTELETAHPELITPDSPTQRVGAAALDAFEKVTHDLPMLSLGNVFDETEIREWVARIERSLGRSTTYVAELKFDGLAISLKYEDGQLVRGATRGDGTVGENITQNLRTIKALPLRLRRNETVEVRGEAYMPKQSFERLNADRAAREEALFANPRNAAAGSLRQLDSSITASRNLSLFVYGVGVNTLSARSHSEAMLQLAELGLPTNKEMQTCETVEEILAYIAHWTMERSNLPYEIDGIVLKVDRYDDQEELGFTAKSPRFATAYKFAAEEVMTTVEEVDFSVGRTGKVTPRARFAPVVVAGSTVSYATLHNADFITEKDIRLHDQVIIKKAGDVIPAVVSVVVSERTGNEQPIEFPAHCPACESELVRLEGEADIRCVSPECPAQLVEGIIHFVSRQAMNIDGLGEKVVRQLYEHEAIRTLADLYRLDRDELLTYERMGETSVDNLLTAIEASKQNSLERLMFGLGIRLVGQKAAYLLAERFDSLDGIAQAEYEDILAIDGIGSKIADSVTKYFEHPEAQALIKDLAELGLNQQFLGQRVDQSNAPLAGKTIVLTGTLESLKRSEAGKRLELLGADVTGSVSKKTDILVAGEKAGSKLTKAESLGIEIWNETQLLEELAKYEG</sequence>
<keyword id="KW-0227">DNA damage</keyword>
<keyword id="KW-0234">DNA repair</keyword>
<keyword id="KW-0235">DNA replication</keyword>
<keyword id="KW-0436">Ligase</keyword>
<keyword id="KW-0460">Magnesium</keyword>
<keyword id="KW-0464">Manganese</keyword>
<keyword id="KW-0479">Metal-binding</keyword>
<keyword id="KW-0520">NAD</keyword>
<keyword id="KW-1185">Reference proteome</keyword>
<keyword id="KW-0862">Zinc</keyword>
<evidence type="ECO:0000255" key="1">
    <source>
        <dbReference type="HAMAP-Rule" id="MF_01588"/>
    </source>
</evidence>
<reference key="1">
    <citation type="submission" date="2008-04" db="EMBL/GenBank/DDBJ databases">
        <title>Complete sequence of chromosome of Exiguobacterium sibiricum 255-15.</title>
        <authorList>
            <consortium name="US DOE Joint Genome Institute"/>
            <person name="Copeland A."/>
            <person name="Lucas S."/>
            <person name="Lapidus A."/>
            <person name="Glavina del Rio T."/>
            <person name="Dalin E."/>
            <person name="Tice H."/>
            <person name="Bruce D."/>
            <person name="Goodwin L."/>
            <person name="Pitluck S."/>
            <person name="Kiss H."/>
            <person name="Chertkov O."/>
            <person name="Monk C."/>
            <person name="Brettin T."/>
            <person name="Detter J.C."/>
            <person name="Han C."/>
            <person name="Kuske C.R."/>
            <person name="Schmutz J."/>
            <person name="Larimer F."/>
            <person name="Land M."/>
            <person name="Hauser L."/>
            <person name="Kyrpides N."/>
            <person name="Mikhailova N."/>
            <person name="Vishnivetskaya T."/>
            <person name="Rodrigues D.F."/>
            <person name="Gilichinsky D."/>
            <person name="Tiedje J."/>
            <person name="Richardson P."/>
        </authorList>
    </citation>
    <scope>NUCLEOTIDE SEQUENCE [LARGE SCALE GENOMIC DNA]</scope>
    <source>
        <strain>DSM 17290 / CCUG 55495 / CIP 109462 / JCM 13490 / 255-15</strain>
    </source>
</reference>